<proteinExistence type="evidence at transcript level"/>
<name>CCBS_DAUCA</name>
<dbReference type="EMBL" id="X69554">
    <property type="protein sequence ID" value="CAA49286.1"/>
    <property type="molecule type" value="Genomic_DNA"/>
</dbReference>
<dbReference type="PIR" id="S35237">
    <property type="entry name" value="S35237"/>
</dbReference>
<dbReference type="GO" id="GO:0016020">
    <property type="term" value="C:membrane"/>
    <property type="evidence" value="ECO:0007669"/>
    <property type="project" value="InterPro"/>
</dbReference>
<dbReference type="GO" id="GO:0005739">
    <property type="term" value="C:mitochondrion"/>
    <property type="evidence" value="ECO:0007669"/>
    <property type="project" value="UniProtKB-SubCell"/>
</dbReference>
<dbReference type="GO" id="GO:0020037">
    <property type="term" value="F:heme binding"/>
    <property type="evidence" value="ECO:0007669"/>
    <property type="project" value="InterPro"/>
</dbReference>
<dbReference type="GO" id="GO:0015232">
    <property type="term" value="F:heme transmembrane transporter activity"/>
    <property type="evidence" value="ECO:0007669"/>
    <property type="project" value="InterPro"/>
</dbReference>
<dbReference type="GO" id="GO:0017004">
    <property type="term" value="P:cytochrome complex assembly"/>
    <property type="evidence" value="ECO:0007669"/>
    <property type="project" value="UniProtKB-KW"/>
</dbReference>
<dbReference type="InterPro" id="IPR002541">
    <property type="entry name" value="Cyt_c_assembly"/>
</dbReference>
<dbReference type="InterPro" id="IPR003567">
    <property type="entry name" value="Cyt_c_biogenesis"/>
</dbReference>
<dbReference type="InterPro" id="IPR003569">
    <property type="entry name" value="Cyt_c_biogenesis_plant"/>
</dbReference>
<dbReference type="PANTHER" id="PTHR43653">
    <property type="entry name" value="CYTOCHROME C ASSEMBLY PROTEIN-RELATED"/>
    <property type="match status" value="1"/>
</dbReference>
<dbReference type="PANTHER" id="PTHR43653:SF1">
    <property type="entry name" value="CYTOCHROME C-TYPE BIOGENESIS PROTEIN CCMF"/>
    <property type="match status" value="1"/>
</dbReference>
<dbReference type="Pfam" id="PF01578">
    <property type="entry name" value="Cytochrom_C_asm"/>
    <property type="match status" value="1"/>
</dbReference>
<dbReference type="PIRSF" id="PIRSF005240">
    <property type="entry name" value="Cytc_biog_CcbS"/>
    <property type="match status" value="1"/>
</dbReference>
<dbReference type="PRINTS" id="PR01410">
    <property type="entry name" value="CCBIOGENESIS"/>
</dbReference>
<dbReference type="PRINTS" id="PR01412">
    <property type="entry name" value="CCBSBIOGNSIS"/>
</dbReference>
<reference key="1">
    <citation type="journal article" date="1993" name="Mol. Gen. Genet.">
        <title>A plant mitochondrial gene encodes a protein involved in cytochrome c biogenesis.</title>
        <authorList>
            <person name="Schuster W."/>
            <person name="Combettes B."/>
            <person name="Flieger K."/>
            <person name="Brennicke A."/>
        </authorList>
    </citation>
    <scope>NUCLEOTIDE SEQUENCE [GENOMIC DNA]</scope>
    <scope>SUGGESTION OF RNA EDITING</scope>
</reference>
<feature type="chain" id="PRO_0000201620" description="Probable cytochrome c biosynthesis protein">
    <location>
        <begin position="1"/>
        <end position="579"/>
    </location>
</feature>
<evidence type="ECO:0000250" key="1">
    <source>
        <dbReference type="UniProtKB" id="Q04648"/>
    </source>
</evidence>
<evidence type="ECO:0000305" key="2"/>
<accession>Q04647</accession>
<keyword id="KW-0201">Cytochrome c-type biogenesis</keyword>
<keyword id="KW-0496">Mitochondrion</keyword>
<keyword id="KW-0691">RNA editing</keyword>
<sequence length="579" mass="65691">MSIYELFHYSLFLGLFVAFTYNKKQPPVFGAALAFWCILLSFLGLSFRHIPNNLSNYNVLTANAPFFYQISGTWSNHEGSISLWCRILSFYGFLLCYRGRPQSHNVSKRGGHRETLFYSFVSNFVKNPILSLPRYEQKSRAAPQLYTPFVLRTFVDSELRSRRNRTFDGPALFYVYAPLYPERKMSFAPLGARLPVVRGEGKRMSLLLHLARDDKERASSIDEQRIDGALGIALFFSPFLSASSDPFVRNFFVRTEPLAESNPVPQDPISAIHPPCIYAGDVASAMGFGLCRSKMMNGIVALHSPPMRKDAAEKNGTLFRSAGCVGSRITSELFTLKFKHVGEKCYPALLLRSNRSPLMLLRRRFFALSSLWTGALVDTGREQAKRVVRNGKKDTTTSPLCWTAGANTVVSDQDQEPIRIWILTCRWFLNVGILLGSWWAHHELGRGGWWFRDPVENASFMPRVLATARIHSVILPLLHSWTSFLNIVTLPCCVSGTSSIRSGLLAPVHSFATDDTRGIFLWRFFLLMTGISMILFSQMKQQASVRRTYKKEMVMARSTLVHLRHSARAQPRPVMLWKN</sequence>
<organism>
    <name type="scientific">Daucus carota</name>
    <name type="common">Wild carrot</name>
    <dbReference type="NCBI Taxonomy" id="4039"/>
    <lineage>
        <taxon>Eukaryota</taxon>
        <taxon>Viridiplantae</taxon>
        <taxon>Streptophyta</taxon>
        <taxon>Embryophyta</taxon>
        <taxon>Tracheophyta</taxon>
        <taxon>Spermatophyta</taxon>
        <taxon>Magnoliopsida</taxon>
        <taxon>eudicotyledons</taxon>
        <taxon>Gunneridae</taxon>
        <taxon>Pentapetalae</taxon>
        <taxon>asterids</taxon>
        <taxon>campanulids</taxon>
        <taxon>Apiales</taxon>
        <taxon>Apiaceae</taxon>
        <taxon>Apioideae</taxon>
        <taxon>Scandiceae</taxon>
        <taxon>Daucinae</taxon>
        <taxon>Daucus</taxon>
        <taxon>Daucus sect. Daucus</taxon>
    </lineage>
</organism>
<protein>
    <recommendedName>
        <fullName>Probable cytochrome c biosynthesis protein</fullName>
    </recommendedName>
</protein>
<comment type="function">
    <text>Could be involved in assembly and maturation of cytochromes c. May play a role in guidance of apocytochromes and heme groups for the covalent linkage introduced by the cytochrome-c-heme lyase.</text>
</comment>
<comment type="subcellular location">
    <subcellularLocation>
        <location evidence="2">Mitochondrion</location>
    </subcellularLocation>
</comment>
<comment type="RNA editing" locationType="Undetermined">
    <text evidence="1">Might be subjected to RNA editing.</text>
</comment>
<comment type="similarity">
    <text evidence="2">Belongs to the CcmF/CycK/Ccl1/NrfE/CcsA family.</text>
</comment>
<geneLocation type="mitochondrion"/>